<dbReference type="EC" id="2.7.10.1" evidence="1"/>
<dbReference type="EMBL" id="D83002">
    <property type="protein sequence ID" value="BAA11673.1"/>
    <property type="molecule type" value="mRNA"/>
</dbReference>
<dbReference type="EMBL" id="AC122746">
    <property type="status" value="NOT_ANNOTATED_CDS"/>
    <property type="molecule type" value="Genomic_DNA"/>
</dbReference>
<dbReference type="EMBL" id="AC151265">
    <property type="status" value="NOT_ANNOTATED_CDS"/>
    <property type="molecule type" value="Genomic_DNA"/>
</dbReference>
<dbReference type="EMBL" id="AC154458">
    <property type="status" value="NOT_ANNOTATED_CDS"/>
    <property type="molecule type" value="Genomic_DNA"/>
</dbReference>
<dbReference type="EMBL" id="AC154602">
    <property type="status" value="NOT_ANNOTATED_CDS"/>
    <property type="molecule type" value="Genomic_DNA"/>
</dbReference>
<dbReference type="EMBL" id="AC154659">
    <property type="status" value="NOT_ANNOTATED_CDS"/>
    <property type="molecule type" value="Genomic_DNA"/>
</dbReference>
<dbReference type="EMBL" id="AC155242">
    <property type="status" value="NOT_ANNOTATED_CDS"/>
    <property type="molecule type" value="Genomic_DNA"/>
</dbReference>
<dbReference type="CCDS" id="CCDS37688.1"/>
<dbReference type="PIR" id="T30200">
    <property type="entry name" value="T30200"/>
</dbReference>
<dbReference type="RefSeq" id="NP_031465.2">
    <property type="nucleotide sequence ID" value="NM_007439.2"/>
</dbReference>
<dbReference type="BMRB" id="P97793"/>
<dbReference type="SMR" id="P97793"/>
<dbReference type="BioGRID" id="198070">
    <property type="interactions" value="17"/>
</dbReference>
<dbReference type="FunCoup" id="P97793">
    <property type="interactions" value="122"/>
</dbReference>
<dbReference type="STRING" id="10090.ENSMUSP00000083840"/>
<dbReference type="BindingDB" id="P97793"/>
<dbReference type="ChEMBL" id="CHEMBL5771"/>
<dbReference type="DrugCentral" id="P97793"/>
<dbReference type="GlyCosmos" id="P97793">
    <property type="glycosylation" value="16 sites, No reported glycans"/>
</dbReference>
<dbReference type="GlyGen" id="P97793">
    <property type="glycosylation" value="19 sites, 5 N-linked glycans (5 sites)"/>
</dbReference>
<dbReference type="iPTMnet" id="P97793"/>
<dbReference type="PhosphoSitePlus" id="P97793"/>
<dbReference type="jPOST" id="P97793"/>
<dbReference type="PaxDb" id="10090-ENSMUSP00000083840"/>
<dbReference type="ProteomicsDB" id="296099"/>
<dbReference type="Antibodypedia" id="2099">
    <property type="antibodies" value="1481 antibodies from 40 providers"/>
</dbReference>
<dbReference type="DNASU" id="11682"/>
<dbReference type="Ensembl" id="ENSMUST00000086639.6">
    <property type="protein sequence ID" value="ENSMUSP00000083840.5"/>
    <property type="gene ID" value="ENSMUSG00000055471.8"/>
</dbReference>
<dbReference type="GeneID" id="11682"/>
<dbReference type="KEGG" id="mmu:11682"/>
<dbReference type="UCSC" id="uc008dnb.1">
    <property type="organism name" value="mouse"/>
</dbReference>
<dbReference type="AGR" id="MGI:103305"/>
<dbReference type="CTD" id="238"/>
<dbReference type="MGI" id="MGI:103305">
    <property type="gene designation" value="Alk"/>
</dbReference>
<dbReference type="VEuPathDB" id="HostDB:ENSMUSG00000055471"/>
<dbReference type="eggNOG" id="KOG1095">
    <property type="taxonomic scope" value="Eukaryota"/>
</dbReference>
<dbReference type="GeneTree" id="ENSGT00940000159280"/>
<dbReference type="HOGENOM" id="CLU_001878_2_2_1"/>
<dbReference type="InParanoid" id="P97793"/>
<dbReference type="OMA" id="NTACERQ"/>
<dbReference type="OrthoDB" id="73209at2759"/>
<dbReference type="PhylomeDB" id="P97793"/>
<dbReference type="TreeFam" id="TF351636"/>
<dbReference type="BRENDA" id="2.7.10.1">
    <property type="organism ID" value="3474"/>
</dbReference>
<dbReference type="Reactome" id="R-MMU-201556">
    <property type="pathway name" value="Signaling by ALK"/>
</dbReference>
<dbReference type="Reactome" id="R-MMU-9851151">
    <property type="pathway name" value="MDK and PTN in ALK signaling"/>
</dbReference>
<dbReference type="BioGRID-ORCS" id="11682">
    <property type="hits" value="4 hits in 82 CRISPR screens"/>
</dbReference>
<dbReference type="ChiTaRS" id="Alk">
    <property type="organism name" value="mouse"/>
</dbReference>
<dbReference type="PRO" id="PR:P97793"/>
<dbReference type="Proteomes" id="UP000000589">
    <property type="component" value="Chromosome 17"/>
</dbReference>
<dbReference type="RNAct" id="P97793">
    <property type="molecule type" value="protein"/>
</dbReference>
<dbReference type="Bgee" id="ENSMUSG00000055471">
    <property type="expression patterns" value="Expressed in inferior vagus X ganglion and 124 other cell types or tissues"/>
</dbReference>
<dbReference type="GO" id="GO:0030424">
    <property type="term" value="C:axon"/>
    <property type="evidence" value="ECO:0000266"/>
    <property type="project" value="MGI"/>
</dbReference>
<dbReference type="GO" id="GO:0044297">
    <property type="term" value="C:cell body"/>
    <property type="evidence" value="ECO:0000266"/>
    <property type="project" value="MGI"/>
</dbReference>
<dbReference type="GO" id="GO:0005886">
    <property type="term" value="C:plasma membrane"/>
    <property type="evidence" value="ECO:0000250"/>
    <property type="project" value="MGI"/>
</dbReference>
<dbReference type="GO" id="GO:0032991">
    <property type="term" value="C:protein-containing complex"/>
    <property type="evidence" value="ECO:0000266"/>
    <property type="project" value="MGI"/>
</dbReference>
<dbReference type="GO" id="GO:0005524">
    <property type="term" value="F:ATP binding"/>
    <property type="evidence" value="ECO:0007669"/>
    <property type="project" value="UniProtKB-KW"/>
</dbReference>
<dbReference type="GO" id="GO:0008201">
    <property type="term" value="F:heparin binding"/>
    <property type="evidence" value="ECO:0000250"/>
    <property type="project" value="UniProtKB"/>
</dbReference>
<dbReference type="GO" id="GO:0042802">
    <property type="term" value="F:identical protein binding"/>
    <property type="evidence" value="ECO:0007669"/>
    <property type="project" value="Ensembl"/>
</dbReference>
<dbReference type="GO" id="GO:0004713">
    <property type="term" value="F:protein tyrosine kinase activity"/>
    <property type="evidence" value="ECO:0000266"/>
    <property type="project" value="MGI"/>
</dbReference>
<dbReference type="GO" id="GO:0030298">
    <property type="term" value="F:receptor signaling protein tyrosine kinase activator activity"/>
    <property type="evidence" value="ECO:0000250"/>
    <property type="project" value="UniProtKB"/>
</dbReference>
<dbReference type="GO" id="GO:0004714">
    <property type="term" value="F:transmembrane receptor protein tyrosine kinase activity"/>
    <property type="evidence" value="ECO:0000250"/>
    <property type="project" value="MGI"/>
</dbReference>
<dbReference type="GO" id="GO:0030534">
    <property type="term" value="P:adult behavior"/>
    <property type="evidence" value="ECO:0000315"/>
    <property type="project" value="MGI"/>
</dbReference>
<dbReference type="GO" id="GO:0007420">
    <property type="term" value="P:brain development"/>
    <property type="evidence" value="ECO:0000315"/>
    <property type="project" value="MGI"/>
</dbReference>
<dbReference type="GO" id="GO:0007169">
    <property type="term" value="P:cell surface receptor protein tyrosine kinase signaling pathway"/>
    <property type="evidence" value="ECO:0007669"/>
    <property type="project" value="Ensembl"/>
</dbReference>
<dbReference type="GO" id="GO:0097009">
    <property type="term" value="P:energy homeostasis"/>
    <property type="evidence" value="ECO:0000315"/>
    <property type="project" value="UniProtKB"/>
</dbReference>
<dbReference type="GO" id="GO:0021766">
    <property type="term" value="P:hippocampus development"/>
    <property type="evidence" value="ECO:0000315"/>
    <property type="project" value="MGI"/>
</dbReference>
<dbReference type="GO" id="GO:0050995">
    <property type="term" value="P:negative regulation of lipid catabolic process"/>
    <property type="evidence" value="ECO:0000315"/>
    <property type="project" value="UniProtKB"/>
</dbReference>
<dbReference type="GO" id="GO:0038083">
    <property type="term" value="P:peptidyl-tyrosine autophosphorylation"/>
    <property type="evidence" value="ECO:0000250"/>
    <property type="project" value="UniProtKB"/>
</dbReference>
<dbReference type="GO" id="GO:1900006">
    <property type="term" value="P:positive regulation of dendrite development"/>
    <property type="evidence" value="ECO:0000315"/>
    <property type="project" value="UniProtKB"/>
</dbReference>
<dbReference type="GO" id="GO:0042127">
    <property type="term" value="P:regulation of cell population proliferation"/>
    <property type="evidence" value="ECO:0000315"/>
    <property type="project" value="MGI"/>
</dbReference>
<dbReference type="GO" id="GO:0060159">
    <property type="term" value="P:regulation of dopamine receptor signaling pathway"/>
    <property type="evidence" value="ECO:0000315"/>
    <property type="project" value="MGI"/>
</dbReference>
<dbReference type="GO" id="GO:0090648">
    <property type="term" value="P:response to environmental enrichment"/>
    <property type="evidence" value="ECO:0000315"/>
    <property type="project" value="MGI"/>
</dbReference>
<dbReference type="GO" id="GO:0006950">
    <property type="term" value="P:response to stress"/>
    <property type="evidence" value="ECO:0000315"/>
    <property type="project" value="MGI"/>
</dbReference>
<dbReference type="GO" id="GO:0036269">
    <property type="term" value="P:swimming behavior"/>
    <property type="evidence" value="ECO:0000315"/>
    <property type="project" value="MGI"/>
</dbReference>
<dbReference type="CDD" id="cd00112">
    <property type="entry name" value="LDLa"/>
    <property type="match status" value="1"/>
</dbReference>
<dbReference type="CDD" id="cd06263">
    <property type="entry name" value="MAM"/>
    <property type="match status" value="2"/>
</dbReference>
<dbReference type="CDD" id="cd05036">
    <property type="entry name" value="PTKc_ALK_LTK"/>
    <property type="match status" value="1"/>
</dbReference>
<dbReference type="FunFam" id="1.10.510.10:FF:000113">
    <property type="entry name" value="Tyrosine-protein kinase receptor"/>
    <property type="match status" value="1"/>
</dbReference>
<dbReference type="FunFam" id="2.60.120.200:FF:000132">
    <property type="entry name" value="Tyrosine-protein kinase receptor"/>
    <property type="match status" value="1"/>
</dbReference>
<dbReference type="FunFam" id="2.60.120.200:FF:000154">
    <property type="entry name" value="Tyrosine-protein kinase receptor"/>
    <property type="match status" value="1"/>
</dbReference>
<dbReference type="FunFam" id="3.30.200.20:FF:000117">
    <property type="entry name" value="Tyrosine-protein kinase receptor"/>
    <property type="match status" value="1"/>
</dbReference>
<dbReference type="Gene3D" id="2.60.120.200">
    <property type="match status" value="2"/>
</dbReference>
<dbReference type="Gene3D" id="4.10.400.10">
    <property type="entry name" value="Low-density Lipoprotein Receptor"/>
    <property type="match status" value="1"/>
</dbReference>
<dbReference type="Gene3D" id="3.30.200.20">
    <property type="entry name" value="Phosphorylase Kinase, domain 1"/>
    <property type="match status" value="1"/>
</dbReference>
<dbReference type="Gene3D" id="1.10.510.10">
    <property type="entry name" value="Transferase(Phosphotransferase) domain 1"/>
    <property type="match status" value="1"/>
</dbReference>
<dbReference type="InterPro" id="IPR055163">
    <property type="entry name" value="ALK/LTK-like_GRD"/>
</dbReference>
<dbReference type="InterPro" id="IPR013320">
    <property type="entry name" value="ConA-like_dom_sf"/>
</dbReference>
<dbReference type="InterPro" id="IPR011009">
    <property type="entry name" value="Kinase-like_dom_sf"/>
</dbReference>
<dbReference type="InterPro" id="IPR036055">
    <property type="entry name" value="LDL_receptor-like_sf"/>
</dbReference>
<dbReference type="InterPro" id="IPR002172">
    <property type="entry name" value="LDrepeatLR_classA_rpt"/>
</dbReference>
<dbReference type="InterPro" id="IPR000998">
    <property type="entry name" value="MAM_dom"/>
</dbReference>
<dbReference type="InterPro" id="IPR000719">
    <property type="entry name" value="Prot_kinase_dom"/>
</dbReference>
<dbReference type="InterPro" id="IPR017441">
    <property type="entry name" value="Protein_kinase_ATP_BS"/>
</dbReference>
<dbReference type="InterPro" id="IPR050122">
    <property type="entry name" value="RTK"/>
</dbReference>
<dbReference type="InterPro" id="IPR001245">
    <property type="entry name" value="Ser-Thr/Tyr_kinase_cat_dom"/>
</dbReference>
<dbReference type="InterPro" id="IPR008266">
    <property type="entry name" value="Tyr_kinase_AS"/>
</dbReference>
<dbReference type="InterPro" id="IPR020635">
    <property type="entry name" value="Tyr_kinase_cat_dom"/>
</dbReference>
<dbReference type="InterPro" id="IPR002011">
    <property type="entry name" value="Tyr_kinase_rcpt_2_CS"/>
</dbReference>
<dbReference type="PANTHER" id="PTHR24416:SF276">
    <property type="entry name" value="ALK TYROSINE KINASE RECEPTOR"/>
    <property type="match status" value="1"/>
</dbReference>
<dbReference type="PANTHER" id="PTHR24416">
    <property type="entry name" value="TYROSINE-PROTEIN KINASE RECEPTOR"/>
    <property type="match status" value="1"/>
</dbReference>
<dbReference type="Pfam" id="PF12810">
    <property type="entry name" value="ALK_LTK_GRD"/>
    <property type="match status" value="1"/>
</dbReference>
<dbReference type="Pfam" id="PF00629">
    <property type="entry name" value="MAM"/>
    <property type="match status" value="2"/>
</dbReference>
<dbReference type="Pfam" id="PF07714">
    <property type="entry name" value="PK_Tyr_Ser-Thr"/>
    <property type="match status" value="1"/>
</dbReference>
<dbReference type="PRINTS" id="PR00109">
    <property type="entry name" value="TYRKINASE"/>
</dbReference>
<dbReference type="SMART" id="SM00192">
    <property type="entry name" value="LDLa"/>
    <property type="match status" value="1"/>
</dbReference>
<dbReference type="SMART" id="SM00219">
    <property type="entry name" value="TyrKc"/>
    <property type="match status" value="1"/>
</dbReference>
<dbReference type="SUPFAM" id="SSF49899">
    <property type="entry name" value="Concanavalin A-like lectins/glucanases"/>
    <property type="match status" value="2"/>
</dbReference>
<dbReference type="SUPFAM" id="SSF57424">
    <property type="entry name" value="LDL receptor-like module"/>
    <property type="match status" value="1"/>
</dbReference>
<dbReference type="SUPFAM" id="SSF56112">
    <property type="entry name" value="Protein kinase-like (PK-like)"/>
    <property type="match status" value="1"/>
</dbReference>
<dbReference type="PROSITE" id="PS50060">
    <property type="entry name" value="MAM_2"/>
    <property type="match status" value="2"/>
</dbReference>
<dbReference type="PROSITE" id="PS00107">
    <property type="entry name" value="PROTEIN_KINASE_ATP"/>
    <property type="match status" value="1"/>
</dbReference>
<dbReference type="PROSITE" id="PS50011">
    <property type="entry name" value="PROTEIN_KINASE_DOM"/>
    <property type="match status" value="1"/>
</dbReference>
<dbReference type="PROSITE" id="PS00109">
    <property type="entry name" value="PROTEIN_KINASE_TYR"/>
    <property type="match status" value="1"/>
</dbReference>
<dbReference type="PROSITE" id="PS00239">
    <property type="entry name" value="RECEPTOR_TYR_KIN_II"/>
    <property type="match status" value="1"/>
</dbReference>
<evidence type="ECO:0000250" key="1">
    <source>
        <dbReference type="UniProtKB" id="Q9UM73"/>
    </source>
</evidence>
<evidence type="ECO:0000255" key="2"/>
<evidence type="ECO:0000255" key="3">
    <source>
        <dbReference type="PROSITE-ProRule" id="PRU00128"/>
    </source>
</evidence>
<evidence type="ECO:0000255" key="4">
    <source>
        <dbReference type="PROSITE-ProRule" id="PRU00159"/>
    </source>
</evidence>
<evidence type="ECO:0000255" key="5">
    <source>
        <dbReference type="PROSITE-ProRule" id="PRU10028"/>
    </source>
</evidence>
<evidence type="ECO:0000256" key="6">
    <source>
        <dbReference type="SAM" id="MobiDB-lite"/>
    </source>
</evidence>
<evidence type="ECO:0000269" key="7">
    <source>
    </source>
</evidence>
<evidence type="ECO:0000269" key="8">
    <source>
    </source>
</evidence>
<evidence type="ECO:0000269" key="9">
    <source>
    </source>
</evidence>
<evidence type="ECO:0000269" key="10">
    <source>
    </source>
</evidence>
<evidence type="ECO:0000269" key="11">
    <source>
    </source>
</evidence>
<evidence type="ECO:0000269" key="12">
    <source>
    </source>
</evidence>
<evidence type="ECO:0000269" key="13">
    <source>
    </source>
</evidence>
<evidence type="ECO:0000269" key="14">
    <source>
    </source>
</evidence>
<evidence type="ECO:0000303" key="15">
    <source>
    </source>
</evidence>
<evidence type="ECO:0000305" key="16"/>
<evidence type="ECO:0000312" key="17">
    <source>
        <dbReference type="MGI" id="MGI:103305"/>
    </source>
</evidence>
<proteinExistence type="evidence at protein level"/>
<comment type="function">
    <text evidence="1 7 8 9 11 13 14">Neuronal receptor tyrosine kinase that is essentially and transiently expressed in specific regions of the central and peripheral nervous systems and plays an important role in the genesis and differentiation of the nervous system (PubMed:15226403, PubMed:16458083, PubMed:16878150, PubMed:19200234, PubMed:30497772). Also acts as a key thinness protein involved in the resistance to weight gain: in hypothalamic neurons, controls energy expenditure acting as a negative regulator of white adipose tissue lipolysis and sympathetic tone to fine-tune energy homeostasis (PubMed:32442405). Following activation by ALKAL2 ligand at the cell surface, transduces an extracellular signal into an intracellular response. In contrast, ALKAL1 is not a potent physiological ligand for ALK. Ligand-binding to the extracellular domain induces tyrosine kinase activation, leading to activation of the mitogen-activated protein kinase (MAPK) pathway. Phosphorylates almost exclusively at the first tyrosine of the Y-x-x-x-Y-Y motif. Induces tyrosine phosphorylation of CBL, FRS2, IRS1 and SHC1, as well as of the MAP kinases MAPK1/ERK2 and MAPK3/ERK1. ALK activation may also be regulated by pleiotrophin (PTN) and midkine (MDK). PTN-binding induces MAPK pathway activation, which is important for the anti-apoptotic signaling of PTN and regulation of cell proliferation. MDK-binding induces phosphorylation of the ALK target insulin receptor substrate (IRS1), activates mitogen-activated protein kinases (MAPKs) and PI3-kinase, resulting also in cell proliferation induction. Drives NF-kappa-B activation, probably through IRS1 and the activation of the AKT serine/threonine kinase. Recruitment of IRS1 to activated ALK and the activation of NF-kappa-B are essential for the autocrine growth and survival signaling of MDK (By similarity).</text>
</comment>
<comment type="catalytic activity">
    <reaction evidence="1 5">
        <text>L-tyrosyl-[protein] + ATP = O-phospho-L-tyrosyl-[protein] + ADP + H(+)</text>
        <dbReference type="Rhea" id="RHEA:10596"/>
        <dbReference type="Rhea" id="RHEA-COMP:10136"/>
        <dbReference type="Rhea" id="RHEA-COMP:20101"/>
        <dbReference type="ChEBI" id="CHEBI:15378"/>
        <dbReference type="ChEBI" id="CHEBI:30616"/>
        <dbReference type="ChEBI" id="CHEBI:46858"/>
        <dbReference type="ChEBI" id="CHEBI:61978"/>
        <dbReference type="ChEBI" id="CHEBI:456216"/>
        <dbReference type="EC" id="2.7.10.1"/>
    </reaction>
</comment>
<comment type="activity regulation">
    <text evidence="1">Activated upon ALKAL2 ligand-binding. ALKAL2-driven activation is coupled with heparin-binding (By similarity). Following ligand-binding, homodimerizes and autophosphorylates, activating its kinase activity (By similarity). Inactivated through dephosphorylation by receptor protein tyrosine phosphatase beta and zeta complex (PTPRB/PTPRZ1) when there is no stimulation by a ligand (By similarity).</text>
</comment>
<comment type="subunit">
    <text evidence="1 7 9">Homodimer; homodimerizes following heparin- and ligand-binding (By similarity). Interacts with CBL, IRS1, PIK3R1 and PLCG1 (PubMed:15226403, PubMed:16878150). Interacts with FRS2 and SHC1 (PubMed:15226403, PubMed:16878150). Interacts with PTN and MDK (By similarity).</text>
</comment>
<comment type="subcellular location">
    <subcellularLocation>
        <location evidence="1">Cell membrane</location>
        <topology evidence="1">Single-pass type I membrane protein</topology>
    </subcellularLocation>
    <text evidence="1">Membrane attachment is essential for promotion of neuron-like differentiation and cell proliferation arrest through specific activation of the MAP kinase pathway.</text>
</comment>
<comment type="tissue specificity">
    <text evidence="8 14">Mainly expressed in central nervous system (CNS) and other parts of the brain such as the paraventricular nucleus (PVN) of the hypothalamus. Expression is also found in peripheral nervous systems, eye, nasal epithelium, olfactory nerve, tongue, skin, tissue surrounding the esophagus, stomach, midgut, as well as testis and ovary.</text>
</comment>
<comment type="induction">
    <text evidence="14">In the hypothalamus, expression is induced in response to feeding.</text>
</comment>
<comment type="domain">
    <text evidence="1">The EGF-like region drives the cytokine specificity for ALKAL2.</text>
</comment>
<comment type="domain">
    <text evidence="1">The heparin-binding region binds heparin glycosaminoglycan. Heparin-binding is required for ALKAL2-driven activation.</text>
</comment>
<comment type="PTM">
    <text evidence="1">Phosphorylated at tyrosine residues by autocatalysis, which activates kinase activity. In cells not stimulated by a ligand, receptor protein tyrosine phosphatase beta and zeta complex (PTPRB/PTPRZ1) dephosphorylates ALK at the sites in ALK that are undergoing autophosphorylation through autoactivation.</text>
</comment>
<comment type="disruption phenotype">
    <text evidence="10 12 14">Mice display a decrease in newborn neurons and defects in brain function (PubMed:17487225, PubMed:22079349). Mice show an age-dependent increase in basal hippocampal progenitor proliferation and alterations in behavioral tests (PubMed:17487225). Mice lacking both Alk and Ltk show a strong reduction in newborn neurons (PubMed:22079349). Mutants develop a thin phenotype at the age of 5 weeks, persisting into adulthood with reduced body adiposity, elevated adiponectin levels and improved glucose homeostasis, while having unaltered food intake and activity (PubMed:32442405). They show a marked resistance to diet- and leptin-mutation-induced obesity and exhibit increased adipose tissue lipolysis (PubMed:32442405).</text>
</comment>
<comment type="similarity">
    <text evidence="4">Belongs to the protein kinase superfamily. Tyr protein kinase family. Insulin receptor subfamily.</text>
</comment>
<feature type="signal peptide" evidence="2">
    <location>
        <begin position="1"/>
        <end position="18"/>
    </location>
</feature>
<feature type="chain" id="PRO_0000016741" description="ALK tyrosine kinase receptor">
    <location>
        <begin position="19"/>
        <end position="1621"/>
    </location>
</feature>
<feature type="topological domain" description="Extracellular" evidence="2">
    <location>
        <begin position="19"/>
        <end position="1042"/>
    </location>
</feature>
<feature type="transmembrane region" description="Helical" evidence="2">
    <location>
        <begin position="1043"/>
        <end position="1063"/>
    </location>
</feature>
<feature type="topological domain" description="Cytoplasmic" evidence="2">
    <location>
        <begin position="1064"/>
        <end position="1621"/>
    </location>
</feature>
<feature type="domain" description="MAM 1" evidence="3">
    <location>
        <begin position="268"/>
        <end position="431"/>
    </location>
</feature>
<feature type="domain" description="LDL-receptor class A">
    <location>
        <begin position="441"/>
        <end position="477"/>
    </location>
</feature>
<feature type="domain" description="MAM 2" evidence="3">
    <location>
        <begin position="482"/>
        <end position="640"/>
    </location>
</feature>
<feature type="domain" description="Protein kinase" evidence="4">
    <location>
        <begin position="1120"/>
        <end position="1396"/>
    </location>
</feature>
<feature type="region of interest" description="Heparin-binding region" evidence="1">
    <location>
        <begin position="48"/>
        <end position="70"/>
    </location>
</feature>
<feature type="region of interest" description="EGF-like" evidence="1">
    <location>
        <begin position="991"/>
        <end position="1029"/>
    </location>
</feature>
<feature type="region of interest" description="Disordered" evidence="6">
    <location>
        <begin position="1412"/>
        <end position="1556"/>
    </location>
</feature>
<feature type="compositionally biased region" description="Basic and acidic residues" evidence="6">
    <location>
        <begin position="1414"/>
        <end position="1423"/>
    </location>
</feature>
<feature type="compositionally biased region" description="Low complexity" evidence="6">
    <location>
        <begin position="1441"/>
        <end position="1461"/>
    </location>
</feature>
<feature type="compositionally biased region" description="Gly residues" evidence="6">
    <location>
        <begin position="1462"/>
        <end position="1472"/>
    </location>
</feature>
<feature type="compositionally biased region" description="Polar residues" evidence="6">
    <location>
        <begin position="1506"/>
        <end position="1518"/>
    </location>
</feature>
<feature type="compositionally biased region" description="Gly residues" evidence="6">
    <location>
        <begin position="1543"/>
        <end position="1552"/>
    </location>
</feature>
<feature type="active site" description="Proton acceptor" evidence="4 5">
    <location>
        <position position="1253"/>
    </location>
</feature>
<feature type="binding site" evidence="4">
    <location>
        <begin position="1126"/>
        <end position="1134"/>
    </location>
    <ligand>
        <name>ATP</name>
        <dbReference type="ChEBI" id="CHEBI:30616"/>
    </ligand>
</feature>
<feature type="binding site" evidence="4">
    <location>
        <position position="1128"/>
    </location>
    <ligand>
        <name>ATP</name>
        <dbReference type="ChEBI" id="CHEBI:30616"/>
    </ligand>
</feature>
<feature type="binding site" evidence="4">
    <location>
        <position position="1154"/>
    </location>
    <ligand>
        <name>ATP</name>
        <dbReference type="ChEBI" id="CHEBI:30616"/>
    </ligand>
</feature>
<feature type="binding site" evidence="4">
    <location>
        <begin position="1201"/>
        <end position="1203"/>
    </location>
    <ligand>
        <name>ATP</name>
        <dbReference type="ChEBI" id="CHEBI:30616"/>
    </ligand>
</feature>
<feature type="binding site" evidence="4">
    <location>
        <position position="1274"/>
    </location>
    <ligand>
        <name>ATP</name>
        <dbReference type="ChEBI" id="CHEBI:30616"/>
    </ligand>
</feature>
<feature type="modified residue" description="Phosphotyrosine" evidence="1">
    <location>
        <position position="1082"/>
    </location>
</feature>
<feature type="modified residue" description="Phosphotyrosine" evidence="9">
    <location>
        <position position="1096"/>
    </location>
</feature>
<feature type="modified residue" description="Phosphotyrosine" evidence="1">
    <location>
        <position position="1100"/>
    </location>
</feature>
<feature type="modified residue" description="Phosphotyrosine" evidence="1">
    <location>
        <position position="1135"/>
    </location>
</feature>
<feature type="modified residue" description="Phosphotyrosine" evidence="1">
    <location>
        <position position="1282"/>
    </location>
</feature>
<feature type="modified residue" description="Phosphotyrosine" evidence="1">
    <location>
        <position position="1516"/>
    </location>
</feature>
<feature type="glycosylation site" description="N-linked (GlcNAc...) asparagine" evidence="2">
    <location>
        <position position="174"/>
    </location>
</feature>
<feature type="glycosylation site" description="N-linked (GlcNAc...) asparagine" evidence="2">
    <location>
        <position position="248"/>
    </location>
</feature>
<feature type="glycosylation site" description="N-linked (GlcNAc...) asparagine" evidence="2">
    <location>
        <position position="289"/>
    </location>
</feature>
<feature type="glycosylation site" description="N-linked (GlcNAc...) asparagine" evidence="2">
    <location>
        <position position="328"/>
    </location>
</feature>
<feature type="glycosylation site" description="N-linked (GlcNAc...) asparagine" evidence="2">
    <location>
        <position position="415"/>
    </location>
</feature>
<feature type="glycosylation site" description="N-linked (GlcNAc...) asparagine" evidence="2">
    <location>
        <position position="428"/>
    </location>
</feature>
<feature type="glycosylation site" description="N-linked (GlcNAc...) asparagine" evidence="2">
    <location>
        <position position="449"/>
    </location>
</feature>
<feature type="glycosylation site" description="N-linked (GlcNAc...) asparagine" evidence="2">
    <location>
        <position position="567"/>
    </location>
</feature>
<feature type="glycosylation site" description="N-linked (GlcNAc...) asparagine" evidence="2">
    <location>
        <position position="575"/>
    </location>
</feature>
<feature type="glycosylation site" description="N-linked (GlcNAc...) asparagine" evidence="2">
    <location>
        <position position="631"/>
    </location>
</feature>
<feature type="glycosylation site" description="N-linked (GlcNAc...) asparagine" evidence="2">
    <location>
        <position position="673"/>
    </location>
</feature>
<feature type="glycosylation site" description="N-linked (GlcNAc...) asparagine" evidence="2">
    <location>
        <position position="713"/>
    </location>
</feature>
<feature type="glycosylation site" description="N-linked (GlcNAc...) asparagine" evidence="2">
    <location>
        <position position="812"/>
    </location>
</feature>
<feature type="glycosylation site" description="N-linked (GlcNAc...) asparagine" evidence="2">
    <location>
        <position position="868"/>
    </location>
</feature>
<feature type="glycosylation site" description="N-linked (GlcNAc...) asparagine" evidence="2">
    <location>
        <position position="890"/>
    </location>
</feature>
<feature type="glycosylation site" description="N-linked (GlcNAc...) asparagine" evidence="2">
    <location>
        <position position="990"/>
    </location>
</feature>
<feature type="disulfide bond" evidence="1">
    <location>
        <begin position="692"/>
        <end position="705"/>
    </location>
</feature>
<feature type="disulfide bond" evidence="1">
    <location>
        <begin position="787"/>
        <end position="798"/>
    </location>
</feature>
<feature type="disulfide bond" evidence="1">
    <location>
        <begin position="910"/>
        <end position="932"/>
    </location>
</feature>
<feature type="disulfide bond" evidence="1">
    <location>
        <begin position="991"/>
        <end position="999"/>
    </location>
</feature>
<feature type="disulfide bond" evidence="1">
    <location>
        <begin position="994"/>
        <end position="1010"/>
    </location>
</feature>
<feature type="disulfide bond" evidence="1">
    <location>
        <begin position="1012"/>
        <end position="1025"/>
    </location>
</feature>
<feature type="sequence conflict" description="In Ref. 1; BAA11673." evidence="16" ref="1">
    <original>KL</original>
    <variation>NV</variation>
    <location>
        <begin position="138"/>
        <end position="139"/>
    </location>
</feature>
<feature type="sequence conflict" description="In Ref. 1; BAA11673." evidence="16" ref="1">
    <original>M</original>
    <variation>L</variation>
    <location>
        <position position="232"/>
    </location>
</feature>
<feature type="sequence conflict" description="In Ref. 1; BAA11673." evidence="16" ref="1">
    <original>T</original>
    <variation>R</variation>
    <location>
        <position position="857"/>
    </location>
</feature>
<feature type="sequence conflict" description="In Ref. 1; BAA11673." evidence="16" ref="1">
    <original>ME</original>
    <variation>IQ</variation>
    <location>
        <begin position="1075"/>
        <end position="1076"/>
    </location>
</feature>
<feature type="sequence conflict" description="In Ref. 1; BAA11673." evidence="16" ref="1">
    <original>E</original>
    <variation>A</variation>
    <location>
        <position position="1522"/>
    </location>
</feature>
<feature type="sequence conflict" description="In Ref. 1; BAA11673." evidence="16" ref="1">
    <original>G</original>
    <variation>P</variation>
    <location>
        <position position="1586"/>
    </location>
</feature>
<gene>
    <name evidence="15 17" type="primary">Alk</name>
</gene>
<sequence>MGAAGFLWLLPPLLLAAASYSGAATDQRAGSPASGPPLQPREPLSYSRLQRKSLAVDFVVPSLFRVYARDLLLPQPRSPSEPEAGGLEARGSLALDCEPLLRLLGPLPGISWADGASSPSPEAGPTLSRVLKGGSVRKLRRAKQLVLELGEETILEGCIGPPEEVAAVGILQFNLSELFSWWILHGEGRLRIRLMPEKKASEVGREGRLSSAIRASQPRLLFQIFGTGHSSMESPSETPSPPGTFMWNLTWTMKDSFPFLSHRSRYGLECSFDFPCELEYSPPLHNHGNQSWSWRHVPSEEASRMNLLDGPEAEHSQEMPRGSFLLLNTSADSKHTILSPWMRSSSDHCTLAVSVHRHLQPSGRYVAQLLPHNEAGREILLVPTPGKHGWTVLQGRVGRPANPFRVALEYISSGNRSLSAVDFFALKNCSEGTSPGSKMALQSSFTCWNGTVLQLGQACDFHQDCAQGEDEGQLCSKLPAGFYCNFENGFCGWTQSPLSPHMPRWQVRTLRDAHSQGHQGRALLLSTTDILASEGATVTSATFPAPMKNSPCELRMSWLIRGVLRGNVSLVLVENKTGKEQSRTVWHVATDEGLSLWQHTVLSLLDVTDRFWLQIVTWWGPGSRATVGFDNISISLDCYLTISGEEKMSLNSVPKSRNLFEKNPNKESKSWANISGPTPIFDPTVHWLFTTCGASGPHGPTQAQCNNAYQNSNLSVVVGSEGPLKGVQIWKVPATDTYSISGYGAAGGKGGKNTMMRSHGVSVLGIFNLEKGDTLYILVGQQGEDACPRANQLIQKVCVGENNVIEEEIRVNRSVHEWAGGGGGGGGATYVFKMKDGVPVPLIIAAGGGGRAYGAKTETFHPERLESNSSVLGLNGNSGAAGGGGGWNDNTSLLWAGKSLLEGAAGGHSCPQAMKKWGWETRGGFGGGGGGCSSGGGGGGYIGGNAASNNDPEMDGEDGVSFISPLGILYTPALKVMEGHGEVNIKHYLNCSHCEVDECHMDPESHKVICFCDHGTVLADDGVSCIVSPTPEPHLPLSLILSVVTSALVAALVLAFSGIMIVYRRKHQELQAMQMELQSPEYKLSKLRTSTIMTDYNPNYCFAGKTSSISDLKEVPRKNITLIRGLGHGAFGEVYEGQVSGMPNDPSPLQVAVKTLPEVCSEQDELDFLMEALIISKFNHQNIVRCIGVSLQALPRFILLELMAGGDLKSFLRETRPRPNQPTSLAMLDLLHVARDIACGCQYLEENHFIHRDIAARNCLLTCPGAGRIAKIGDFGMARDIYRASYYRKGGCAMLPVKWMPPEAFMEGIFTSKTDTWSFGVLLWEIFSLGYMPYPSKSNQEVLEFVTSGGRMDPPKNCPGPVYRIMTQCWQHQPEDRPNFAIILERIEYCTQDPDVINTALPIEYGPVVEEEEKVPMRPKDPEGMPPLLVSPQPAKHEEASAAPQPAALTAPGPSVKKPPGAGAGAGAGAGAGPVPRGAADRGHVNMAFSQPNPPPELHKGPGSRNKPTSLWNPTYGSWFTEKPAKKTHPPPGAEPQARAGAAEGGWTGPGAGPRRAEAALLLEPSALSATMKEVPLFRLRHFPCGNVNYGYQQQGLPLEATAAPGDTMLKSKNKVTQPGP</sequence>
<organism>
    <name type="scientific">Mus musculus</name>
    <name type="common">Mouse</name>
    <dbReference type="NCBI Taxonomy" id="10090"/>
    <lineage>
        <taxon>Eukaryota</taxon>
        <taxon>Metazoa</taxon>
        <taxon>Chordata</taxon>
        <taxon>Craniata</taxon>
        <taxon>Vertebrata</taxon>
        <taxon>Euteleostomi</taxon>
        <taxon>Mammalia</taxon>
        <taxon>Eutheria</taxon>
        <taxon>Euarchontoglires</taxon>
        <taxon>Glires</taxon>
        <taxon>Rodentia</taxon>
        <taxon>Myomorpha</taxon>
        <taxon>Muroidea</taxon>
        <taxon>Muridae</taxon>
        <taxon>Murinae</taxon>
        <taxon>Mus</taxon>
        <taxon>Mus</taxon>
    </lineage>
</organism>
<protein>
    <recommendedName>
        <fullName evidence="16">ALK tyrosine kinase receptor</fullName>
        <ecNumber evidence="1">2.7.10.1</ecNumber>
    </recommendedName>
    <alternativeName>
        <fullName evidence="15">Anaplastic lymphoma kinase</fullName>
    </alternativeName>
    <cdAntigenName>CD246</cdAntigenName>
</protein>
<accession>P97793</accession>
<accession>E9QKV3</accession>
<keyword id="KW-0067">ATP-binding</keyword>
<keyword id="KW-1003">Cell membrane</keyword>
<keyword id="KW-1015">Disulfide bond</keyword>
<keyword id="KW-0325">Glycoprotein</keyword>
<keyword id="KW-0418">Kinase</keyword>
<keyword id="KW-0472">Membrane</keyword>
<keyword id="KW-0547">Nucleotide-binding</keyword>
<keyword id="KW-0597">Phosphoprotein</keyword>
<keyword id="KW-0675">Receptor</keyword>
<keyword id="KW-1185">Reference proteome</keyword>
<keyword id="KW-0677">Repeat</keyword>
<keyword id="KW-0732">Signal</keyword>
<keyword id="KW-0808">Transferase</keyword>
<keyword id="KW-0812">Transmembrane</keyword>
<keyword id="KW-1133">Transmembrane helix</keyword>
<keyword id="KW-0829">Tyrosine-protein kinase</keyword>
<name>ALK_MOUSE</name>
<reference key="1">
    <citation type="journal article" date="1997" name="Oncogene">
        <title>Molecular characterization of ALK, a receptor tyrosine kinase expressed specifically in the nervous system.</title>
        <authorList>
            <person name="Iwahara T."/>
            <person name="Fujimoto J."/>
            <person name="Wen D."/>
            <person name="Cupples R."/>
            <person name="Bucay N."/>
            <person name="Arakawa T."/>
            <person name="Mori S."/>
            <person name="Ratzkin B."/>
            <person name="Yamamoto T."/>
        </authorList>
    </citation>
    <scope>NUCLEOTIDE SEQUENCE [MRNA]</scope>
    <source>
        <tissue>Brain</tissue>
        <tissue>Testis</tissue>
    </source>
</reference>
<reference key="2">
    <citation type="journal article" date="2009" name="PLoS Biol.">
        <title>Lineage-specific biology revealed by a finished genome assembly of the mouse.</title>
        <authorList>
            <person name="Church D.M."/>
            <person name="Goodstadt L."/>
            <person name="Hillier L.W."/>
            <person name="Zody M.C."/>
            <person name="Goldstein S."/>
            <person name="She X."/>
            <person name="Bult C.J."/>
            <person name="Agarwala R."/>
            <person name="Cherry J.L."/>
            <person name="DiCuccio M."/>
            <person name="Hlavina W."/>
            <person name="Kapustin Y."/>
            <person name="Meric P."/>
            <person name="Maglott D."/>
            <person name="Birtle Z."/>
            <person name="Marques A.C."/>
            <person name="Graves T."/>
            <person name="Zhou S."/>
            <person name="Teague B."/>
            <person name="Potamousis K."/>
            <person name="Churas C."/>
            <person name="Place M."/>
            <person name="Herschleb J."/>
            <person name="Runnheim R."/>
            <person name="Forrest D."/>
            <person name="Amos-Landgraf J."/>
            <person name="Schwartz D.C."/>
            <person name="Cheng Z."/>
            <person name="Lindblad-Toh K."/>
            <person name="Eichler E.E."/>
            <person name="Ponting C.P."/>
        </authorList>
    </citation>
    <scope>NUCLEOTIDE SEQUENCE [LARGE SCALE GENOMIC DNA]</scope>
    <source>
        <strain>C57BL/6J</strain>
    </source>
</reference>
<reference key="3">
    <citation type="journal article" date="2004" name="J. Cell Sci.">
        <title>ALK receptor tyrosine kinase promotes cell growth and neurite outgrowth.</title>
        <authorList>
            <person name="Motegi A."/>
            <person name="Fujimoto J."/>
            <person name="Kotani M."/>
            <person name="Sakuraba H."/>
            <person name="Yamamoto T."/>
        </authorList>
    </citation>
    <scope>PHOSPHORYLATION</scope>
    <scope>INTERACTION WITH CBL; IRS1; PIK3R1; PLCG1 AND SHC1</scope>
    <scope>FUNCTION IN PHOSPHORYLATION OF CBL; IRS1 AND SHC1</scope>
</reference>
<reference key="4">
    <citation type="journal article" date="2006" name="Gene Expr. Patterns">
        <title>Characterization of the expression of the ALK receptor tyrosine kinase in mice.</title>
        <authorList>
            <person name="Vernersson E."/>
            <person name="Khoo N.K."/>
            <person name="Henriksson M.L."/>
            <person name="Roos G."/>
            <person name="Palmer R.H."/>
            <person name="Hallberg B."/>
        </authorList>
    </citation>
    <scope>TISSUE SPECIFICITY</scope>
    <scope>FUNCTION</scope>
</reference>
<reference key="5">
    <citation type="journal article" date="2007" name="Oncogene">
        <title>Recruitment of insulin receptor substrate-1 and activation of NF-kappaB essential for midkine growth signaling through anaplastic lymphoma kinase.</title>
        <authorList>
            <person name="Kuo A.H."/>
            <person name="Stoica G.E."/>
            <person name="Riegel A.T."/>
            <person name="Wellstein A."/>
        </authorList>
    </citation>
    <scope>INTERACTION WITH IRS1 AND SHC</scope>
    <scope>PHOSPHORYLATION AT TYR-1096</scope>
    <scope>FUNCTION</scope>
</reference>
<reference key="6">
    <citation type="journal article" date="2008" name="Neuropsychopharmacology">
        <title>Behavioral and neurochemical alterations in mice deficient in anaplastic lymphoma kinase suggest therapeutic potential for psychiatric indications.</title>
        <authorList>
            <person name="Bilsland J.G."/>
            <person name="Wheeldon A."/>
            <person name="Mead A."/>
            <person name="Znamenskiy P."/>
            <person name="Almond S."/>
            <person name="Waters K.A."/>
            <person name="Thakur M."/>
            <person name="Beaumont V."/>
            <person name="Bonnert T.P."/>
            <person name="Heavens R."/>
            <person name="Whiting P."/>
            <person name="McAllister G."/>
            <person name="Munoz-Sanjuan I."/>
        </authorList>
    </citation>
    <scope>DISRUPTION PHENOTYPE</scope>
</reference>
<reference key="7">
    <citation type="journal article" date="2009" name="Eur. J. Neurosci.">
        <title>ALK (Anaplastic Lymphoma Kinase) expression in DRG neurons and its involvement in neuron-Schwann cells interaction.</title>
        <authorList>
            <person name="Degoutin J."/>
            <person name="Brunet-de Carvalho N."/>
            <person name="Cifuentes-Diaz C."/>
            <person name="Vigny M."/>
        </authorList>
    </citation>
    <scope>FUNCTION</scope>
</reference>
<reference key="8">
    <citation type="journal article" date="2012" name="Pharmacol. Biochem. Behav.">
        <title>Anaplastic lymphoma kinase and leukocyte tyrosine kinase: functions and genetic interactions in learning, memory and adult neurogenesis.</title>
        <authorList>
            <person name="Weiss J.B."/>
            <person name="Xue C."/>
            <person name="Benice T."/>
            <person name="Xue L."/>
            <person name="Morris S.W."/>
            <person name="Raber J."/>
        </authorList>
    </citation>
    <scope>DISRUPTION PHENOTYPE</scope>
</reference>
<reference key="9">
    <citation type="journal article" date="2009" name="Biochem. J.">
        <title>Anaplastic lymphoma kinase: signalling in development and disease.</title>
        <authorList>
            <person name="Palmer R.H."/>
            <person name="Vernersson E."/>
            <person name="Grabbe C."/>
            <person name="Hallberg B."/>
        </authorList>
    </citation>
    <scope>REVIEW ON FUNCTION</scope>
</reference>
<reference key="10">
    <citation type="journal article" date="2019" name="Neuron">
        <title>Neural Stem Cells Behave as a Functional Niche for the Maturation of Newborn Neurons through the Secretion of PTN.</title>
        <authorList>
            <person name="Tang C."/>
            <person name="Wang M."/>
            <person name="Wang P."/>
            <person name="Wang L."/>
            <person name="Wu Q."/>
            <person name="Guo W."/>
        </authorList>
    </citation>
    <scope>FUNCTION</scope>
</reference>
<reference key="11">
    <citation type="journal article" date="2020" name="Cell">
        <title>Identification of ALK in Thinness.</title>
        <authorList>
            <person name="Orthofer M."/>
            <person name="Valsesia A."/>
            <person name="Maegi R."/>
            <person name="Wang Q.P."/>
            <person name="Kaczanowska J."/>
            <person name="Kozieradzki I."/>
            <person name="Leopoldi A."/>
            <person name="Cikes D."/>
            <person name="Zopf L.M."/>
            <person name="Tretiakov E.O."/>
            <person name="Demetz E."/>
            <person name="Hilbe R."/>
            <person name="Boehm A."/>
            <person name="Ticevic M."/>
            <person name="Noukas M."/>
            <person name="Jais A."/>
            <person name="Spirk K."/>
            <person name="Clark T."/>
            <person name="Amann S."/>
            <person name="Lepamets M."/>
            <person name="Neumayr C."/>
            <person name="Arnold C."/>
            <person name="Dou Z."/>
            <person name="Kuhn V."/>
            <person name="Novatchkova M."/>
            <person name="Cronin S.J.F."/>
            <person name="Tietge U.J.F."/>
            <person name="Mueller S."/>
            <person name="Pospisilik J.A."/>
            <person name="Nagy V."/>
            <person name="Hui C.C."/>
            <person name="Lazovic J."/>
            <person name="Esterbauer H."/>
            <person name="Hagelkruys A."/>
            <person name="Tancevski I."/>
            <person name="Kiefer F.W."/>
            <person name="Harkany T."/>
            <person name="Haubensak W."/>
            <person name="Neely G.G."/>
            <person name="Metspalu A."/>
            <person name="Hager J."/>
            <person name="Gheldof N."/>
            <person name="Penninger J.M."/>
        </authorList>
    </citation>
    <scope>FUNCTION</scope>
    <scope>DISRUPTION PHENOTYPE</scope>
    <scope>TISSUE SPECIFICITY</scope>
    <scope>INDUCTION BY FEEDING</scope>
</reference>